<name>PUR9_SHIF8</name>
<gene>
    <name evidence="1" type="primary">purH</name>
    <name type="ordered locus">SFV_4078</name>
</gene>
<comment type="catalytic activity">
    <reaction evidence="1">
        <text>(6R)-10-formyltetrahydrofolate + 5-amino-1-(5-phospho-beta-D-ribosyl)imidazole-4-carboxamide = 5-formamido-1-(5-phospho-D-ribosyl)imidazole-4-carboxamide + (6S)-5,6,7,8-tetrahydrofolate</text>
        <dbReference type="Rhea" id="RHEA:22192"/>
        <dbReference type="ChEBI" id="CHEBI:57453"/>
        <dbReference type="ChEBI" id="CHEBI:58467"/>
        <dbReference type="ChEBI" id="CHEBI:58475"/>
        <dbReference type="ChEBI" id="CHEBI:195366"/>
        <dbReference type="EC" id="2.1.2.3"/>
    </reaction>
</comment>
<comment type="catalytic activity">
    <reaction evidence="1">
        <text>IMP + H2O = 5-formamido-1-(5-phospho-D-ribosyl)imidazole-4-carboxamide</text>
        <dbReference type="Rhea" id="RHEA:18445"/>
        <dbReference type="ChEBI" id="CHEBI:15377"/>
        <dbReference type="ChEBI" id="CHEBI:58053"/>
        <dbReference type="ChEBI" id="CHEBI:58467"/>
        <dbReference type="EC" id="3.5.4.10"/>
    </reaction>
</comment>
<comment type="pathway">
    <text evidence="1">Purine metabolism; IMP biosynthesis via de novo pathway; 5-formamido-1-(5-phospho-D-ribosyl)imidazole-4-carboxamide from 5-amino-1-(5-phospho-D-ribosyl)imidazole-4-carboxamide (10-formyl THF route): step 1/1.</text>
</comment>
<comment type="pathway">
    <text evidence="1">Purine metabolism; IMP biosynthesis via de novo pathway; IMP from 5-formamido-1-(5-phospho-D-ribosyl)imidazole-4-carboxamide: step 1/1.</text>
</comment>
<comment type="domain">
    <text evidence="1">The IMP cyclohydrolase activity resides in the N-terminal region.</text>
</comment>
<comment type="similarity">
    <text evidence="1">Belongs to the PurH family.</text>
</comment>
<evidence type="ECO:0000255" key="1">
    <source>
        <dbReference type="HAMAP-Rule" id="MF_00139"/>
    </source>
</evidence>
<evidence type="ECO:0000255" key="2">
    <source>
        <dbReference type="PROSITE-ProRule" id="PRU01202"/>
    </source>
</evidence>
<sequence length="529" mass="57358">MQQRRPVRRALLSVSDKAGIVEFAQALSARGVELLSTGGTARLLAEKGLPVTEVSDYTGFPEMMDGRVKTLHPKVHGGILGRRGQDDAIMEEHQIQPIDMVVVNLYPFAQTVAREGCSLEDAVENIDIGGPTMVRSAAKNHKDVAIVVKSSDYDAIIKEMDDNEGSLTLATRFDLAIKAFEHTAAYDSMIANYFGSMVPAYHGESKEAAGRFPRTLNLNFIKKQDMRYGENSHQQAAFYIEENVKEASVATATQVQGKALSYNNIADTDAALECVKEFAEPACVIVKHANPCGVAIGNSILDAYDRAYKTDPTSAFGGIIAFNRELDAETAQAIISRQFVEVIIAPSASEEALKITAAKQNVRVLTCGQWGERVPGLDFKRVNGGLLVQDRDLGMVGAEELRVVTQRQPTEQELRDALFCWKVAKFVKSNAIVYAKNNMTIGIGAGQMSRVYSAKIAGIKAADEGLEVKGSSMASDAFFPFRDGIDAAAAAGVTCVIQPGGSIRDDEVIAAADEHGIAMLFTDMRHFRH</sequence>
<proteinExistence type="inferred from homology"/>
<dbReference type="EC" id="2.1.2.3" evidence="1"/>
<dbReference type="EC" id="3.5.4.10" evidence="1"/>
<dbReference type="EMBL" id="CP000266">
    <property type="protein sequence ID" value="ABF06071.1"/>
    <property type="molecule type" value="Genomic_DNA"/>
</dbReference>
<dbReference type="RefSeq" id="WP_001187566.1">
    <property type="nucleotide sequence ID" value="NC_008258.1"/>
</dbReference>
<dbReference type="SMR" id="Q0SXZ4"/>
<dbReference type="KEGG" id="sfv:SFV_4078"/>
<dbReference type="HOGENOM" id="CLU_016316_5_2_6"/>
<dbReference type="UniPathway" id="UPA00074">
    <property type="reaction ID" value="UER00133"/>
</dbReference>
<dbReference type="UniPathway" id="UPA00074">
    <property type="reaction ID" value="UER00135"/>
</dbReference>
<dbReference type="Proteomes" id="UP000000659">
    <property type="component" value="Chromosome"/>
</dbReference>
<dbReference type="GO" id="GO:0005829">
    <property type="term" value="C:cytosol"/>
    <property type="evidence" value="ECO:0007669"/>
    <property type="project" value="TreeGrafter"/>
</dbReference>
<dbReference type="GO" id="GO:0003937">
    <property type="term" value="F:IMP cyclohydrolase activity"/>
    <property type="evidence" value="ECO:0007669"/>
    <property type="project" value="UniProtKB-UniRule"/>
</dbReference>
<dbReference type="GO" id="GO:0004643">
    <property type="term" value="F:phosphoribosylaminoimidazolecarboxamide formyltransferase activity"/>
    <property type="evidence" value="ECO:0007669"/>
    <property type="project" value="UniProtKB-UniRule"/>
</dbReference>
<dbReference type="GO" id="GO:0006189">
    <property type="term" value="P:'de novo' IMP biosynthetic process"/>
    <property type="evidence" value="ECO:0007669"/>
    <property type="project" value="UniProtKB-UniRule"/>
</dbReference>
<dbReference type="CDD" id="cd01421">
    <property type="entry name" value="IMPCH"/>
    <property type="match status" value="1"/>
</dbReference>
<dbReference type="FunFam" id="3.40.140.20:FF:000001">
    <property type="entry name" value="Bifunctional purine biosynthesis protein PurH"/>
    <property type="match status" value="1"/>
</dbReference>
<dbReference type="FunFam" id="3.40.140.20:FF:000002">
    <property type="entry name" value="Bifunctional purine biosynthesis protein PurH"/>
    <property type="match status" value="1"/>
</dbReference>
<dbReference type="FunFam" id="3.40.50.1380:FF:000001">
    <property type="entry name" value="Bifunctional purine biosynthesis protein PurH"/>
    <property type="match status" value="1"/>
</dbReference>
<dbReference type="Gene3D" id="3.40.140.20">
    <property type="match status" value="2"/>
</dbReference>
<dbReference type="Gene3D" id="3.40.50.1380">
    <property type="entry name" value="Methylglyoxal synthase-like domain"/>
    <property type="match status" value="1"/>
</dbReference>
<dbReference type="HAMAP" id="MF_00139">
    <property type="entry name" value="PurH"/>
    <property type="match status" value="1"/>
</dbReference>
<dbReference type="InterPro" id="IPR024051">
    <property type="entry name" value="AICAR_Tfase_dup_dom_sf"/>
</dbReference>
<dbReference type="InterPro" id="IPR016193">
    <property type="entry name" value="Cytidine_deaminase-like"/>
</dbReference>
<dbReference type="InterPro" id="IPR011607">
    <property type="entry name" value="MGS-like_dom"/>
</dbReference>
<dbReference type="InterPro" id="IPR036914">
    <property type="entry name" value="MGS-like_dom_sf"/>
</dbReference>
<dbReference type="InterPro" id="IPR002695">
    <property type="entry name" value="PurH-like"/>
</dbReference>
<dbReference type="NCBIfam" id="NF002049">
    <property type="entry name" value="PRK00881.1"/>
    <property type="match status" value="1"/>
</dbReference>
<dbReference type="NCBIfam" id="TIGR00355">
    <property type="entry name" value="purH"/>
    <property type="match status" value="1"/>
</dbReference>
<dbReference type="PANTHER" id="PTHR11692:SF0">
    <property type="entry name" value="BIFUNCTIONAL PURINE BIOSYNTHESIS PROTEIN ATIC"/>
    <property type="match status" value="1"/>
</dbReference>
<dbReference type="PANTHER" id="PTHR11692">
    <property type="entry name" value="BIFUNCTIONAL PURINE BIOSYNTHESIS PROTEIN PURH"/>
    <property type="match status" value="1"/>
</dbReference>
<dbReference type="Pfam" id="PF01808">
    <property type="entry name" value="AICARFT_IMPCHas"/>
    <property type="match status" value="1"/>
</dbReference>
<dbReference type="Pfam" id="PF02142">
    <property type="entry name" value="MGS"/>
    <property type="match status" value="1"/>
</dbReference>
<dbReference type="PIRSF" id="PIRSF000414">
    <property type="entry name" value="AICARFT_IMPCHas"/>
    <property type="match status" value="1"/>
</dbReference>
<dbReference type="SMART" id="SM00798">
    <property type="entry name" value="AICARFT_IMPCHas"/>
    <property type="match status" value="1"/>
</dbReference>
<dbReference type="SMART" id="SM00851">
    <property type="entry name" value="MGS"/>
    <property type="match status" value="1"/>
</dbReference>
<dbReference type="SUPFAM" id="SSF53927">
    <property type="entry name" value="Cytidine deaminase-like"/>
    <property type="match status" value="1"/>
</dbReference>
<dbReference type="SUPFAM" id="SSF52335">
    <property type="entry name" value="Methylglyoxal synthase-like"/>
    <property type="match status" value="1"/>
</dbReference>
<dbReference type="PROSITE" id="PS51855">
    <property type="entry name" value="MGS"/>
    <property type="match status" value="1"/>
</dbReference>
<feature type="chain" id="PRO_1000018956" description="Bifunctional purine biosynthesis protein PurH">
    <location>
        <begin position="1"/>
        <end position="529"/>
    </location>
</feature>
<feature type="domain" description="MGS-like" evidence="2">
    <location>
        <begin position="1"/>
        <end position="148"/>
    </location>
</feature>
<feature type="modified residue" description="N6-acetyllysine" evidence="1">
    <location>
        <position position="287"/>
    </location>
</feature>
<reference key="1">
    <citation type="journal article" date="2006" name="BMC Genomics">
        <title>Complete genome sequence of Shigella flexneri 5b and comparison with Shigella flexneri 2a.</title>
        <authorList>
            <person name="Nie H."/>
            <person name="Yang F."/>
            <person name="Zhang X."/>
            <person name="Yang J."/>
            <person name="Chen L."/>
            <person name="Wang J."/>
            <person name="Xiong Z."/>
            <person name="Peng J."/>
            <person name="Sun L."/>
            <person name="Dong J."/>
            <person name="Xue Y."/>
            <person name="Xu X."/>
            <person name="Chen S."/>
            <person name="Yao Z."/>
            <person name="Shen Y."/>
            <person name="Jin Q."/>
        </authorList>
    </citation>
    <scope>NUCLEOTIDE SEQUENCE [LARGE SCALE GENOMIC DNA]</scope>
    <source>
        <strain>8401</strain>
    </source>
</reference>
<protein>
    <recommendedName>
        <fullName evidence="1">Bifunctional purine biosynthesis protein PurH</fullName>
    </recommendedName>
    <domain>
        <recommendedName>
            <fullName evidence="1">Phosphoribosylaminoimidazolecarboxamide formyltransferase</fullName>
            <ecNumber evidence="1">2.1.2.3</ecNumber>
        </recommendedName>
        <alternativeName>
            <fullName evidence="1">AICAR transformylase</fullName>
        </alternativeName>
    </domain>
    <domain>
        <recommendedName>
            <fullName evidence="1">IMP cyclohydrolase</fullName>
            <ecNumber evidence="1">3.5.4.10</ecNumber>
        </recommendedName>
        <alternativeName>
            <fullName evidence="1">ATIC</fullName>
        </alternativeName>
        <alternativeName>
            <fullName evidence="1">IMP synthase</fullName>
        </alternativeName>
        <alternativeName>
            <fullName evidence="1">Inosinicase</fullName>
        </alternativeName>
    </domain>
</protein>
<accession>Q0SXZ4</accession>
<keyword id="KW-0007">Acetylation</keyword>
<keyword id="KW-0378">Hydrolase</keyword>
<keyword id="KW-0511">Multifunctional enzyme</keyword>
<keyword id="KW-0658">Purine biosynthesis</keyword>
<keyword id="KW-0808">Transferase</keyword>
<organism>
    <name type="scientific">Shigella flexneri serotype 5b (strain 8401)</name>
    <dbReference type="NCBI Taxonomy" id="373384"/>
    <lineage>
        <taxon>Bacteria</taxon>
        <taxon>Pseudomonadati</taxon>
        <taxon>Pseudomonadota</taxon>
        <taxon>Gammaproteobacteria</taxon>
        <taxon>Enterobacterales</taxon>
        <taxon>Enterobacteriaceae</taxon>
        <taxon>Shigella</taxon>
    </lineage>
</organism>